<organism>
    <name type="scientific">Lactococcus lactis subsp. cremoris (strain MG1363)</name>
    <dbReference type="NCBI Taxonomy" id="416870"/>
    <lineage>
        <taxon>Bacteria</taxon>
        <taxon>Bacillati</taxon>
        <taxon>Bacillota</taxon>
        <taxon>Bacilli</taxon>
        <taxon>Lactobacillales</taxon>
        <taxon>Streptococcaceae</taxon>
        <taxon>Lactococcus</taxon>
        <taxon>Lactococcus cremoris subsp. cremoris</taxon>
    </lineage>
</organism>
<keyword id="KW-0067">ATP-binding</keyword>
<keyword id="KW-0238">DNA-binding</keyword>
<keyword id="KW-0255">Endonuclease</keyword>
<keyword id="KW-0378">Hydrolase</keyword>
<keyword id="KW-0540">Nuclease</keyword>
<keyword id="KW-0547">Nucleotide-binding</keyword>
<keyword id="KW-0694">RNA-binding</keyword>
<keyword id="KW-0699">rRNA-binding</keyword>
<name>MUTS2_LACLM</name>
<dbReference type="EC" id="3.1.-.-" evidence="1"/>
<dbReference type="EC" id="3.6.4.-" evidence="1"/>
<dbReference type="EMBL" id="AM406671">
    <property type="protein sequence ID" value="CAL97380.1"/>
    <property type="molecule type" value="Genomic_DNA"/>
</dbReference>
<dbReference type="RefSeq" id="WP_011834759.1">
    <property type="nucleotide sequence ID" value="NC_009004.1"/>
</dbReference>
<dbReference type="SMR" id="A2RJC8"/>
<dbReference type="STRING" id="416870.llmg_0778"/>
<dbReference type="KEGG" id="llm:llmg_0778"/>
<dbReference type="eggNOG" id="COG1193">
    <property type="taxonomic scope" value="Bacteria"/>
</dbReference>
<dbReference type="HOGENOM" id="CLU_011252_2_1_9"/>
<dbReference type="OrthoDB" id="9808166at2"/>
<dbReference type="PhylomeDB" id="A2RJC8"/>
<dbReference type="Proteomes" id="UP000000364">
    <property type="component" value="Chromosome"/>
</dbReference>
<dbReference type="GO" id="GO:0005524">
    <property type="term" value="F:ATP binding"/>
    <property type="evidence" value="ECO:0007669"/>
    <property type="project" value="UniProtKB-UniRule"/>
</dbReference>
<dbReference type="GO" id="GO:0016887">
    <property type="term" value="F:ATP hydrolysis activity"/>
    <property type="evidence" value="ECO:0007669"/>
    <property type="project" value="InterPro"/>
</dbReference>
<dbReference type="GO" id="GO:0140664">
    <property type="term" value="F:ATP-dependent DNA damage sensor activity"/>
    <property type="evidence" value="ECO:0007669"/>
    <property type="project" value="InterPro"/>
</dbReference>
<dbReference type="GO" id="GO:0004519">
    <property type="term" value="F:endonuclease activity"/>
    <property type="evidence" value="ECO:0007669"/>
    <property type="project" value="UniProtKB-UniRule"/>
</dbReference>
<dbReference type="GO" id="GO:0030983">
    <property type="term" value="F:mismatched DNA binding"/>
    <property type="evidence" value="ECO:0007669"/>
    <property type="project" value="InterPro"/>
</dbReference>
<dbReference type="GO" id="GO:0043023">
    <property type="term" value="F:ribosomal large subunit binding"/>
    <property type="evidence" value="ECO:0007669"/>
    <property type="project" value="UniProtKB-UniRule"/>
</dbReference>
<dbReference type="GO" id="GO:0019843">
    <property type="term" value="F:rRNA binding"/>
    <property type="evidence" value="ECO:0007669"/>
    <property type="project" value="UniProtKB-UniRule"/>
</dbReference>
<dbReference type="GO" id="GO:0006298">
    <property type="term" value="P:mismatch repair"/>
    <property type="evidence" value="ECO:0007669"/>
    <property type="project" value="InterPro"/>
</dbReference>
<dbReference type="GO" id="GO:0045910">
    <property type="term" value="P:negative regulation of DNA recombination"/>
    <property type="evidence" value="ECO:0007669"/>
    <property type="project" value="InterPro"/>
</dbReference>
<dbReference type="GO" id="GO:0072344">
    <property type="term" value="P:rescue of stalled ribosome"/>
    <property type="evidence" value="ECO:0007669"/>
    <property type="project" value="UniProtKB-UniRule"/>
</dbReference>
<dbReference type="CDD" id="cd03280">
    <property type="entry name" value="ABC_MutS2"/>
    <property type="match status" value="1"/>
</dbReference>
<dbReference type="FunFam" id="3.40.50.300:FF:000830">
    <property type="entry name" value="Endonuclease MutS2"/>
    <property type="match status" value="1"/>
</dbReference>
<dbReference type="Gene3D" id="3.30.1370.110">
    <property type="match status" value="1"/>
</dbReference>
<dbReference type="Gene3D" id="3.40.50.300">
    <property type="entry name" value="P-loop containing nucleotide triphosphate hydrolases"/>
    <property type="match status" value="1"/>
</dbReference>
<dbReference type="HAMAP" id="MF_00092">
    <property type="entry name" value="MutS2"/>
    <property type="match status" value="1"/>
</dbReference>
<dbReference type="InterPro" id="IPR000432">
    <property type="entry name" value="DNA_mismatch_repair_MutS_C"/>
</dbReference>
<dbReference type="InterPro" id="IPR007696">
    <property type="entry name" value="DNA_mismatch_repair_MutS_core"/>
</dbReference>
<dbReference type="InterPro" id="IPR036187">
    <property type="entry name" value="DNA_mismatch_repair_MutS_sf"/>
</dbReference>
<dbReference type="InterPro" id="IPR046893">
    <property type="entry name" value="MSSS"/>
</dbReference>
<dbReference type="InterPro" id="IPR045076">
    <property type="entry name" value="MutS"/>
</dbReference>
<dbReference type="InterPro" id="IPR005747">
    <property type="entry name" value="MutS2"/>
</dbReference>
<dbReference type="InterPro" id="IPR027417">
    <property type="entry name" value="P-loop_NTPase"/>
</dbReference>
<dbReference type="InterPro" id="IPR002625">
    <property type="entry name" value="Smr_dom"/>
</dbReference>
<dbReference type="InterPro" id="IPR036063">
    <property type="entry name" value="Smr_dom_sf"/>
</dbReference>
<dbReference type="NCBIfam" id="TIGR01069">
    <property type="entry name" value="mutS2"/>
    <property type="match status" value="1"/>
</dbReference>
<dbReference type="PANTHER" id="PTHR48466:SF2">
    <property type="entry name" value="OS10G0509000 PROTEIN"/>
    <property type="match status" value="1"/>
</dbReference>
<dbReference type="PANTHER" id="PTHR48466">
    <property type="entry name" value="OS10G0509000 PROTEIN-RELATED"/>
    <property type="match status" value="1"/>
</dbReference>
<dbReference type="Pfam" id="PF20297">
    <property type="entry name" value="MSSS"/>
    <property type="match status" value="1"/>
</dbReference>
<dbReference type="Pfam" id="PF00488">
    <property type="entry name" value="MutS_V"/>
    <property type="match status" value="1"/>
</dbReference>
<dbReference type="Pfam" id="PF01713">
    <property type="entry name" value="Smr"/>
    <property type="match status" value="1"/>
</dbReference>
<dbReference type="PIRSF" id="PIRSF005814">
    <property type="entry name" value="MutS_YshD"/>
    <property type="match status" value="1"/>
</dbReference>
<dbReference type="SMART" id="SM00534">
    <property type="entry name" value="MUTSac"/>
    <property type="match status" value="1"/>
</dbReference>
<dbReference type="SMART" id="SM00533">
    <property type="entry name" value="MUTSd"/>
    <property type="match status" value="1"/>
</dbReference>
<dbReference type="SMART" id="SM00463">
    <property type="entry name" value="SMR"/>
    <property type="match status" value="1"/>
</dbReference>
<dbReference type="SUPFAM" id="SSF48334">
    <property type="entry name" value="DNA repair protein MutS, domain III"/>
    <property type="match status" value="1"/>
</dbReference>
<dbReference type="SUPFAM" id="SSF52540">
    <property type="entry name" value="P-loop containing nucleoside triphosphate hydrolases"/>
    <property type="match status" value="1"/>
</dbReference>
<dbReference type="SUPFAM" id="SSF160443">
    <property type="entry name" value="SMR domain-like"/>
    <property type="match status" value="1"/>
</dbReference>
<dbReference type="PROSITE" id="PS00486">
    <property type="entry name" value="DNA_MISMATCH_REPAIR_2"/>
    <property type="match status" value="1"/>
</dbReference>
<dbReference type="PROSITE" id="PS50828">
    <property type="entry name" value="SMR"/>
    <property type="match status" value="1"/>
</dbReference>
<proteinExistence type="inferred from homology"/>
<protein>
    <recommendedName>
        <fullName evidence="1">Endonuclease MutS2</fullName>
        <ecNumber evidence="1">3.1.-.-</ecNumber>
    </recommendedName>
    <alternativeName>
        <fullName evidence="1">Ribosome-associated protein quality control-upstream factor</fullName>
        <shortName evidence="1">RQC-upstream factor</shortName>
        <shortName evidence="1">RqcU</shortName>
        <ecNumber evidence="1">3.6.4.-</ecNumber>
    </alternativeName>
</protein>
<evidence type="ECO:0000255" key="1">
    <source>
        <dbReference type="HAMAP-Rule" id="MF_00092"/>
    </source>
</evidence>
<accession>A2RJC8</accession>
<reference key="1">
    <citation type="journal article" date="2007" name="J. Bacteriol.">
        <title>The complete genome sequence of the lactic acid bacterial paradigm Lactococcus lactis subsp. cremoris MG1363.</title>
        <authorList>
            <person name="Wegmann U."/>
            <person name="O'Connell-Motherway M."/>
            <person name="Zomer A."/>
            <person name="Buist G."/>
            <person name="Shearman C."/>
            <person name="Canchaya C."/>
            <person name="Ventura M."/>
            <person name="Goesmann A."/>
            <person name="Gasson M.J."/>
            <person name="Kuipers O.P."/>
            <person name="van Sinderen D."/>
            <person name="Kok J."/>
        </authorList>
    </citation>
    <scope>NUCLEOTIDE SEQUENCE [LARGE SCALE GENOMIC DNA]</scope>
    <source>
        <strain>MG1363</strain>
    </source>
</reference>
<sequence>MNKKILQILEYDKVKEQFMNALTTAQGQKELSDLVPLTDKDKIQLLFDEVADFRLLTQENGLLNLGKTNDLTEILRRLELEASLSGKEFVEIKKVIQLGINIQRFFDEAENVETPSLNITLEKLVDLSGLIKKLEIFDNAGSLYDNASLELMHIRASIKSHQSEIRKIMQEMLTKNLSSLSENVITIRNDRQVLPVKAENKNKIAGVVHDMSASGQTLYIEPNAVVSLNNKLNQKRIEERQEITRIYRELAEELKPYSFDIRQNAWLIGHIDFVRAKYLYLTANKASLPALTNDKDIILFAARHPLIDAKMVVANDIKFDKTLNTIVITGPNTGGKTITLKTVGLLTILAQSGLPILAEDGSRIHLFDDIFADIGDEQSIEQSLSTFSSHMTNIVQILAQADENSLVLFDELGAGTDPKEGAALAIAILENLRKRNVKTMASTHYPELKAYGVETQQVINASMEFNIDKMQPTYHLQLGVPGRSNALEISRRLGLPETIISEAGQQISESEHDVNQMIEKLEEKTREVIESSRNIKKIERENQSLHKDLTKVYNQINRERDFELEKAQKEAQEVVKKASLEAQEILKNLNDKAALKPHEIIAARKELEGLAPTIDFSKNKVLKKAKAQRGLKQGAEVNVTSYGQRGKLIRLEKDGRWTVQMGSITTRLSEEEFEVIETPEQIQAKTKNVSKKVTSKVKAQLDLRGMRYEEAELELDNYIDQALLANLIQITIVHGIGTGVIREMVQKKLQKHRHIKSYEYAPINAGGSGATIAILK</sequence>
<gene>
    <name evidence="1" type="primary">mutS2</name>
    <name evidence="1" type="synonym">rqcU</name>
    <name type="ordered locus">llmg_0778</name>
</gene>
<comment type="function">
    <text evidence="1">Endonuclease that is involved in the suppression of homologous recombination and thus may have a key role in the control of bacterial genetic diversity.</text>
</comment>
<comment type="function">
    <text evidence="1">Acts as a ribosome collision sensor, splitting the ribosome into its 2 subunits. Detects stalled/collided 70S ribosomes which it binds and splits by an ATP-hydrolysis driven conformational change. Acts upstream of the ribosome quality control system (RQC), a ribosome-associated complex that mediates the extraction of incompletely synthesized nascent chains from stalled ribosomes and their subsequent degradation. Probably generates substrates for RQC.</text>
</comment>
<comment type="subunit">
    <text evidence="1">Homodimer. Binds to stalled ribosomes, contacting rRNA.</text>
</comment>
<comment type="similarity">
    <text evidence="1">Belongs to the DNA mismatch repair MutS family. MutS2 subfamily.</text>
</comment>
<feature type="chain" id="PRO_1000093368" description="Endonuclease MutS2">
    <location>
        <begin position="1"/>
        <end position="776"/>
    </location>
</feature>
<feature type="domain" description="Smr" evidence="1">
    <location>
        <begin position="701"/>
        <end position="776"/>
    </location>
</feature>
<feature type="binding site" evidence="1">
    <location>
        <begin position="330"/>
        <end position="337"/>
    </location>
    <ligand>
        <name>ATP</name>
        <dbReference type="ChEBI" id="CHEBI:30616"/>
    </ligand>
</feature>